<comment type="function">
    <text evidence="1">Intermediate capsid protein that self assembles to form an icosahedral capsid with a T=13 symmetry, which consists of 230 trimers of VP6, with channels at each of its five-fold vertices. This capsid constitutes the middle concentric layer of the viral mature particle. The innermost VP2 capsid and the intermediate VP6 capsid remain intact following cell entry to protect the dsRNA from degradation and to prevent unfavorable antiviral responses in the host cell during all the replication cycle of the virus. Nascent transcripts are transcribed within the structural confines of this double-layered particle (DLP) and are extruded through the channels at the five-fold axes. VP6 is required for the transcription activity of the DLP.</text>
</comment>
<comment type="subunit">
    <text evidence="1">Homotrimer. Interacts with the inner capsid protein VP2. Interacts with the outer capsid glycoprotein VP7. Interacts with the outer capsid protein VP5*.</text>
</comment>
<comment type="subcellular location">
    <subcellularLocation>
        <location evidence="1">Virion</location>
    </subcellularLocation>
    <text evidence="1">Component of the intermediate capsid. Also found in spherical cytoplasmic structures, called virus factories, that appear early after infection and are the site of viral replication and packaging.</text>
</comment>
<comment type="PTM">
    <text evidence="1">The N-terminus is blocked.</text>
</comment>
<comment type="PTM">
    <text evidence="1">Sumoylated with SUMO1 and SUMO2. Sumoylation of viral proteins seems to have a positive role on viral replication.</text>
</comment>
<comment type="miscellaneous">
    <text evidence="1">The VP6 trimer contains a zinc ion located at the center of the molecule. The zinc ion is not essential for either trimerization or transcription activity of the DLP. Zinc-depleted VP6 has an increased sensitivity to proteases.</text>
</comment>
<comment type="similarity">
    <text evidence="1">Belongs to the rotavirus VP6 family.</text>
</comment>
<protein>
    <recommendedName>
        <fullName evidence="1">Intermediate capsid protein VP6</fullName>
    </recommendedName>
</protein>
<organism>
    <name type="scientific">Rotavirus A (strain RVA/SA11-Ramig/G3P[X])</name>
    <name type="common">RV-A</name>
    <name type="synonym">Simian Agent 11 (strain Ramig)</name>
    <dbReference type="NCBI Taxonomy" id="36435"/>
    <lineage>
        <taxon>Viruses</taxon>
        <taxon>Riboviria</taxon>
        <taxon>Orthornavirae</taxon>
        <taxon>Duplornaviricota</taxon>
        <taxon>Resentoviricetes</taxon>
        <taxon>Reovirales</taxon>
        <taxon>Sedoreoviridae</taxon>
        <taxon>Rotavirus</taxon>
        <taxon>Rotavirus A</taxon>
    </lineage>
</organism>
<evidence type="ECO:0000255" key="1">
    <source>
        <dbReference type="HAMAP-Rule" id="MF_04129"/>
    </source>
</evidence>
<dbReference type="EMBL" id="L33365">
    <property type="protein sequence ID" value="AAA60953.1"/>
    <property type="molecule type" value="Genomic_RNA"/>
</dbReference>
<dbReference type="SMR" id="Q6LE89"/>
<dbReference type="GO" id="GO:0019031">
    <property type="term" value="C:viral envelope"/>
    <property type="evidence" value="ECO:0007669"/>
    <property type="project" value="UniProtKB-UniRule"/>
</dbReference>
<dbReference type="GO" id="GO:0039626">
    <property type="term" value="C:viral intermediate capsid"/>
    <property type="evidence" value="ECO:0007669"/>
    <property type="project" value="UniProtKB-UniRule"/>
</dbReference>
<dbReference type="GO" id="GO:0046789">
    <property type="term" value="F:host cell surface receptor binding"/>
    <property type="evidence" value="ECO:0007669"/>
    <property type="project" value="UniProtKB-UniRule"/>
</dbReference>
<dbReference type="GO" id="GO:0046872">
    <property type="term" value="F:metal ion binding"/>
    <property type="evidence" value="ECO:0007669"/>
    <property type="project" value="UniProtKB-UniRule"/>
</dbReference>
<dbReference type="GO" id="GO:0005198">
    <property type="term" value="F:structural molecule activity"/>
    <property type="evidence" value="ECO:0007669"/>
    <property type="project" value="UniProtKB-UniRule"/>
</dbReference>
<dbReference type="GO" id="GO:0019064">
    <property type="term" value="P:fusion of virus membrane with host plasma membrane"/>
    <property type="evidence" value="ECO:0007669"/>
    <property type="project" value="UniProtKB-UniRule"/>
</dbReference>
<dbReference type="FunFam" id="2.60.120.170:FF:000001">
    <property type="entry name" value="Intermediate capsid protein VP6"/>
    <property type="match status" value="1"/>
</dbReference>
<dbReference type="Gene3D" id="2.60.120.170">
    <property type="match status" value="1"/>
</dbReference>
<dbReference type="Gene3D" id="1.10.1350.10">
    <property type="entry name" value="Viral capsid alpha domain"/>
    <property type="match status" value="1"/>
</dbReference>
<dbReference type="HAMAP" id="MF_04126">
    <property type="entry name" value="Rota_VP6"/>
    <property type="match status" value="1"/>
</dbReference>
<dbReference type="HAMAP" id="MF_04129">
    <property type="entry name" value="Rota_VP6_A"/>
    <property type="match status" value="1"/>
</dbReference>
<dbReference type="InterPro" id="IPR008980">
    <property type="entry name" value="Capsid_hemagglutn"/>
</dbReference>
<dbReference type="InterPro" id="IPR001385">
    <property type="entry name" value="Rotavirus_A/C_VP6"/>
</dbReference>
<dbReference type="InterPro" id="IPR008935">
    <property type="entry name" value="Virus_capsid_a-hlx_vir"/>
</dbReference>
<dbReference type="Pfam" id="PF00980">
    <property type="entry name" value="Rota_Capsid_VP6"/>
    <property type="match status" value="1"/>
</dbReference>
<dbReference type="SUPFAM" id="SSF48345">
    <property type="entry name" value="A virus capsid protein alpha-helical domain"/>
    <property type="match status" value="1"/>
</dbReference>
<dbReference type="SUPFAM" id="SSF49818">
    <property type="entry name" value="Viral protein domain"/>
    <property type="match status" value="1"/>
</dbReference>
<reference key="1">
    <citation type="journal article" date="1994" name="Virology">
        <title>Temperature-sensitive lesions in the capsid proteins of the rotavirus mutants tsF and tsG that affect virion assembly.</title>
        <authorList>
            <person name="Mansell E.A."/>
            <person name="Ramig R.F."/>
            <person name="Patton J.T."/>
        </authorList>
    </citation>
    <scope>NUCLEOTIDE SEQUENCE [GENOMIC RNA]</scope>
</reference>
<organismHost>
    <name type="scientific">Macaca mulatta</name>
    <name type="common">Rhesus macaque</name>
    <dbReference type="NCBI Taxonomy" id="9544"/>
</organismHost>
<name>VP6_ROTSR</name>
<keyword id="KW-0106">Calcium</keyword>
<keyword id="KW-0167">Capsid protein</keyword>
<keyword id="KW-1154">Intermediate capsid protein</keyword>
<keyword id="KW-0479">Metal-binding</keyword>
<keyword id="KW-0832">Ubl conjugation</keyword>
<keyword id="KW-0946">Virion</keyword>
<keyword id="KW-0862">Zinc</keyword>
<feature type="chain" id="PRO_0000368184" description="Intermediate capsid protein VP6">
    <location>
        <begin position="1"/>
        <end position="397"/>
    </location>
</feature>
<feature type="region of interest" description="Interaction with the inner capsid protein VP2" evidence="1">
    <location>
        <begin position="62"/>
        <end position="73"/>
    </location>
</feature>
<feature type="binding site" evidence="1">
    <location>
        <position position="153"/>
    </location>
    <ligand>
        <name>Zn(2+)</name>
        <dbReference type="ChEBI" id="CHEBI:29105"/>
        <note>ligand shared between all trimeric partners</note>
    </ligand>
</feature>
<feature type="binding site" evidence="1">
    <location>
        <position position="266"/>
    </location>
    <ligand>
        <name>Ca(2+)</name>
        <dbReference type="ChEBI" id="CHEBI:29108"/>
    </ligand>
</feature>
<feature type="binding site" evidence="1">
    <location>
        <position position="286"/>
    </location>
    <ligand>
        <name>Ca(2+)</name>
        <dbReference type="ChEBI" id="CHEBI:29108"/>
    </ligand>
</feature>
<proteinExistence type="inferred from homology"/>
<accession>Q6LE89</accession>
<sequence length="397" mass="44873">MDVLYSLSKTLKDARDKIVEGTLYSNVSDLIQQFNQMIITMNGNEFQTGGIGNLPIRNWNFNFGLLGTTLLNLDANYVETARNTIDYFVDFVDNVCMDEMVRESQRNGIAPQSDSLRKLSAIKFKRINFDNSSEYIENWNLQNRRQRTGFTFHKPNIFPYSASFTLNRSQPAHDNLMGTMWLNAGSEIQVAGFDYSCAINAPANIQQFEHIVPLRRVLTTATITLLPDAERFSFPRVINSADGATTWFFNPVILRPNNVEVEFLLNGQIINTYQARFGTIVARNFDTIRLSFQLMRPPNMTPAVAVLFPNAQPFEHHATVGLTLRIESAVCESVLADASETLLANVTSVRQEYAIPVGPVFPPGMNWTDLITNYSPSREDNLQRVFTVASIRSMLIK</sequence>